<keyword id="KW-0488">Methylation</keyword>
<keyword id="KW-0687">Ribonucleoprotein</keyword>
<keyword id="KW-0689">Ribosomal protein</keyword>
<keyword id="KW-0694">RNA-binding</keyword>
<keyword id="KW-0699">rRNA-binding</keyword>
<proteinExistence type="inferred from homology"/>
<feature type="chain" id="PRO_1000052023" description="Large ribosomal subunit protein uL3">
    <location>
        <begin position="1"/>
        <end position="219"/>
    </location>
</feature>
<feature type="region of interest" description="Disordered" evidence="2">
    <location>
        <begin position="133"/>
        <end position="153"/>
    </location>
</feature>
<feature type="modified residue" description="N5-methylglutamine" evidence="1">
    <location>
        <position position="153"/>
    </location>
</feature>
<evidence type="ECO:0000255" key="1">
    <source>
        <dbReference type="HAMAP-Rule" id="MF_01325"/>
    </source>
</evidence>
<evidence type="ECO:0000256" key="2">
    <source>
        <dbReference type="SAM" id="MobiDB-lite"/>
    </source>
</evidence>
<evidence type="ECO:0000305" key="3"/>
<name>RL3_BURM9</name>
<sequence length="219" mass="22967">MSLGLVGRKVGMTRIFTAEGDSIPVTVLDVSDNRVTQIKTVETDGYTAVQVAFGSRRASRVTKPLAGHLAKAGVEAGEILKEFRIEADKAAELSNGAVIGPDLFEVGQKVDVQGVSIGKGYAGTIKRYNFGSGRASHGNSRSHNVPGSIGMAQDPGRVFPGKRMTGHMGDETVTVQNLEIARIDADRKLLLVKGAVPGAKGGKVFVTPAVKTRAVKGAK</sequence>
<dbReference type="EMBL" id="CP000546">
    <property type="protein sequence ID" value="ABN01866.1"/>
    <property type="molecule type" value="Genomic_DNA"/>
</dbReference>
<dbReference type="RefSeq" id="WP_004521904.1">
    <property type="nucleotide sequence ID" value="NC_008836.1"/>
</dbReference>
<dbReference type="SMR" id="A2S7H6"/>
<dbReference type="GeneID" id="93061832"/>
<dbReference type="KEGG" id="bml:BMA10229_A1924"/>
<dbReference type="HOGENOM" id="CLU_044142_4_1_4"/>
<dbReference type="Proteomes" id="UP000002283">
    <property type="component" value="Chromosome I"/>
</dbReference>
<dbReference type="GO" id="GO:0022625">
    <property type="term" value="C:cytosolic large ribosomal subunit"/>
    <property type="evidence" value="ECO:0007669"/>
    <property type="project" value="TreeGrafter"/>
</dbReference>
<dbReference type="GO" id="GO:0019843">
    <property type="term" value="F:rRNA binding"/>
    <property type="evidence" value="ECO:0007669"/>
    <property type="project" value="UniProtKB-UniRule"/>
</dbReference>
<dbReference type="GO" id="GO:0003735">
    <property type="term" value="F:structural constituent of ribosome"/>
    <property type="evidence" value="ECO:0007669"/>
    <property type="project" value="InterPro"/>
</dbReference>
<dbReference type="GO" id="GO:0006412">
    <property type="term" value="P:translation"/>
    <property type="evidence" value="ECO:0007669"/>
    <property type="project" value="UniProtKB-UniRule"/>
</dbReference>
<dbReference type="FunFam" id="2.40.30.10:FF:000004">
    <property type="entry name" value="50S ribosomal protein L3"/>
    <property type="match status" value="1"/>
</dbReference>
<dbReference type="FunFam" id="3.30.160.810:FF:000001">
    <property type="entry name" value="50S ribosomal protein L3"/>
    <property type="match status" value="1"/>
</dbReference>
<dbReference type="Gene3D" id="3.30.160.810">
    <property type="match status" value="1"/>
</dbReference>
<dbReference type="Gene3D" id="2.40.30.10">
    <property type="entry name" value="Translation factors"/>
    <property type="match status" value="1"/>
</dbReference>
<dbReference type="HAMAP" id="MF_01325_B">
    <property type="entry name" value="Ribosomal_uL3_B"/>
    <property type="match status" value="1"/>
</dbReference>
<dbReference type="InterPro" id="IPR000597">
    <property type="entry name" value="Ribosomal_uL3"/>
</dbReference>
<dbReference type="InterPro" id="IPR019927">
    <property type="entry name" value="Ribosomal_uL3_bac/org-type"/>
</dbReference>
<dbReference type="InterPro" id="IPR019926">
    <property type="entry name" value="Ribosomal_uL3_CS"/>
</dbReference>
<dbReference type="InterPro" id="IPR009000">
    <property type="entry name" value="Transl_B-barrel_sf"/>
</dbReference>
<dbReference type="NCBIfam" id="TIGR03625">
    <property type="entry name" value="L3_bact"/>
    <property type="match status" value="1"/>
</dbReference>
<dbReference type="PANTHER" id="PTHR11229">
    <property type="entry name" value="50S RIBOSOMAL PROTEIN L3"/>
    <property type="match status" value="1"/>
</dbReference>
<dbReference type="PANTHER" id="PTHR11229:SF16">
    <property type="entry name" value="LARGE RIBOSOMAL SUBUNIT PROTEIN UL3C"/>
    <property type="match status" value="1"/>
</dbReference>
<dbReference type="Pfam" id="PF00297">
    <property type="entry name" value="Ribosomal_L3"/>
    <property type="match status" value="1"/>
</dbReference>
<dbReference type="SUPFAM" id="SSF50447">
    <property type="entry name" value="Translation proteins"/>
    <property type="match status" value="1"/>
</dbReference>
<dbReference type="PROSITE" id="PS00474">
    <property type="entry name" value="RIBOSOMAL_L3"/>
    <property type="match status" value="1"/>
</dbReference>
<gene>
    <name evidence="1" type="primary">rplC</name>
    <name type="ordered locus">BMA10229_A1924</name>
</gene>
<comment type="function">
    <text evidence="1">One of the primary rRNA binding proteins, it binds directly near the 3'-end of the 23S rRNA, where it nucleates assembly of the 50S subunit.</text>
</comment>
<comment type="subunit">
    <text evidence="1">Part of the 50S ribosomal subunit. Forms a cluster with proteins L14 and L19.</text>
</comment>
<comment type="PTM">
    <text evidence="1">Methylated by PrmB.</text>
</comment>
<comment type="similarity">
    <text evidence="1">Belongs to the universal ribosomal protein uL3 family.</text>
</comment>
<protein>
    <recommendedName>
        <fullName evidence="1">Large ribosomal subunit protein uL3</fullName>
    </recommendedName>
    <alternativeName>
        <fullName evidence="3">50S ribosomal protein L3</fullName>
    </alternativeName>
</protein>
<accession>A2S7H6</accession>
<reference key="1">
    <citation type="journal article" date="2010" name="Genome Biol. Evol.">
        <title>Continuing evolution of Burkholderia mallei through genome reduction and large-scale rearrangements.</title>
        <authorList>
            <person name="Losada L."/>
            <person name="Ronning C.M."/>
            <person name="DeShazer D."/>
            <person name="Woods D."/>
            <person name="Fedorova N."/>
            <person name="Kim H.S."/>
            <person name="Shabalina S.A."/>
            <person name="Pearson T.R."/>
            <person name="Brinkac L."/>
            <person name="Tan P."/>
            <person name="Nandi T."/>
            <person name="Crabtree J."/>
            <person name="Badger J."/>
            <person name="Beckstrom-Sternberg S."/>
            <person name="Saqib M."/>
            <person name="Schutzer S.E."/>
            <person name="Keim P."/>
            <person name="Nierman W.C."/>
        </authorList>
    </citation>
    <scope>NUCLEOTIDE SEQUENCE [LARGE SCALE GENOMIC DNA]</scope>
    <source>
        <strain>NCTC 10229</strain>
    </source>
</reference>
<organism>
    <name type="scientific">Burkholderia mallei (strain NCTC 10229)</name>
    <dbReference type="NCBI Taxonomy" id="412022"/>
    <lineage>
        <taxon>Bacteria</taxon>
        <taxon>Pseudomonadati</taxon>
        <taxon>Pseudomonadota</taxon>
        <taxon>Betaproteobacteria</taxon>
        <taxon>Burkholderiales</taxon>
        <taxon>Burkholderiaceae</taxon>
        <taxon>Burkholderia</taxon>
        <taxon>pseudomallei group</taxon>
    </lineage>
</organism>